<comment type="function">
    <text evidence="2">Plays an essential role in the assembly of succinate dehydrogenase (SDH), an enzyme complex (also referred to as respiratory complex II) that is a component of both the tricarboxylic acid (TCA) cycle and the mitochondrial electron transport chain, and which couples the oxidation of succinate to fumarate with the reduction of ubiquinone (coenzyme Q) to ubiquinol. Required for flavinylation (covalent attachment of FAD) of the flavoprotein subunit of the SDH catalytic dimer.</text>
</comment>
<comment type="subunit">
    <text evidence="2">Interacts with the flavoprotein subunit within the SDH catalytic dimer.</text>
</comment>
<comment type="subcellular location">
    <subcellularLocation>
        <location evidence="2">Mitochondrion matrix</location>
    </subcellularLocation>
</comment>
<comment type="similarity">
    <text evidence="2">Belongs to the SDHAF2 family.</text>
</comment>
<organism>
    <name type="scientific">Saccharomyces cerevisiae (strain YJM789)</name>
    <name type="common">Baker's yeast</name>
    <dbReference type="NCBI Taxonomy" id="307796"/>
    <lineage>
        <taxon>Eukaryota</taxon>
        <taxon>Fungi</taxon>
        <taxon>Dikarya</taxon>
        <taxon>Ascomycota</taxon>
        <taxon>Saccharomycotina</taxon>
        <taxon>Saccharomycetes</taxon>
        <taxon>Saccharomycetales</taxon>
        <taxon>Saccharomycetaceae</taxon>
        <taxon>Saccharomyces</taxon>
    </lineage>
</organism>
<proteinExistence type="inferred from homology"/>
<sequence>MHNMFPALTKTLSLQGYKIINSQTGSAAWSCGRRWFSSDKDDHDDVVTRIKISPIKRTNEPLDKKRARLIYQSRKRGILETDLLLSGFAAKYLKKMNEEELEEYDSLLNELDWDIYYWATKNFKTSPLPDKWANSKLLKQLQEFSENKEKEILSMPDLSKYQ</sequence>
<reference key="1">
    <citation type="journal article" date="2007" name="Proc. Natl. Acad. Sci. U.S.A.">
        <title>Genome sequencing and comparative analysis of Saccharomyces cerevisiae strain YJM789.</title>
        <authorList>
            <person name="Wei W."/>
            <person name="McCusker J.H."/>
            <person name="Hyman R.W."/>
            <person name="Jones T."/>
            <person name="Ning Y."/>
            <person name="Cao Z."/>
            <person name="Gu Z."/>
            <person name="Bruno D."/>
            <person name="Miranda M."/>
            <person name="Nguyen M."/>
            <person name="Wilhelmy J."/>
            <person name="Komp C."/>
            <person name="Tamse R."/>
            <person name="Wang X."/>
            <person name="Jia P."/>
            <person name="Luedi P."/>
            <person name="Oefner P.J."/>
            <person name="David L."/>
            <person name="Dietrich F.S."/>
            <person name="Li Y."/>
            <person name="Davis R.W."/>
            <person name="Steinmetz L.M."/>
        </authorList>
    </citation>
    <scope>NUCLEOTIDE SEQUENCE [LARGE SCALE GENOMIC DNA]</scope>
    <source>
        <strain>YJM789</strain>
    </source>
</reference>
<feature type="transit peptide" description="Mitochondrion" evidence="1">
    <location>
        <begin position="1"/>
        <end position="35"/>
    </location>
</feature>
<feature type="chain" id="PRO_0000383202" description="Succinate dehydrogenase assembly factor 2, mitochondrial">
    <location>
        <begin position="36"/>
        <end position="162"/>
    </location>
</feature>
<evidence type="ECO:0000250" key="1">
    <source>
        <dbReference type="UniProtKB" id="Q08230"/>
    </source>
</evidence>
<evidence type="ECO:0000255" key="2">
    <source>
        <dbReference type="HAMAP-Rule" id="MF_03057"/>
    </source>
</evidence>
<name>SDHF2_YEAS7</name>
<gene>
    <name evidence="2" type="primary">SDH5</name>
    <name type="ORF">SCY_5007</name>
</gene>
<protein>
    <recommendedName>
        <fullName evidence="2">Succinate dehydrogenase assembly factor 2, mitochondrial</fullName>
        <shortName evidence="2">SDH assembly factor 2</shortName>
        <shortName evidence="2">SDHAF2</shortName>
    </recommendedName>
</protein>
<keyword id="KW-0143">Chaperone</keyword>
<keyword id="KW-0496">Mitochondrion</keyword>
<keyword id="KW-0809">Transit peptide</keyword>
<dbReference type="EMBL" id="AAFW02000030">
    <property type="protein sequence ID" value="EDN63804.1"/>
    <property type="molecule type" value="Genomic_DNA"/>
</dbReference>
<dbReference type="BMRB" id="A6ZND9"/>
<dbReference type="SMR" id="A6ZND9"/>
<dbReference type="HOGENOM" id="CLU_103054_0_1_1"/>
<dbReference type="Proteomes" id="UP000007060">
    <property type="component" value="Unassembled WGS sequence"/>
</dbReference>
<dbReference type="GO" id="GO:0005759">
    <property type="term" value="C:mitochondrial matrix"/>
    <property type="evidence" value="ECO:0000250"/>
    <property type="project" value="UniProtKB"/>
</dbReference>
<dbReference type="GO" id="GO:0006121">
    <property type="term" value="P:mitochondrial electron transport, succinate to ubiquinone"/>
    <property type="evidence" value="ECO:0000250"/>
    <property type="project" value="UniProtKB"/>
</dbReference>
<dbReference type="GO" id="GO:0034553">
    <property type="term" value="P:mitochondrial respiratory chain complex II assembly"/>
    <property type="evidence" value="ECO:0007669"/>
    <property type="project" value="TreeGrafter"/>
</dbReference>
<dbReference type="GO" id="GO:0018293">
    <property type="term" value="P:protein-FAD linkage"/>
    <property type="evidence" value="ECO:0000250"/>
    <property type="project" value="UniProtKB"/>
</dbReference>
<dbReference type="GO" id="GO:0006099">
    <property type="term" value="P:tricarboxylic acid cycle"/>
    <property type="evidence" value="ECO:0007669"/>
    <property type="project" value="TreeGrafter"/>
</dbReference>
<dbReference type="FunFam" id="1.10.150.250:FF:000002">
    <property type="entry name" value="Succinate dehydrogenase assembly factor 2, mitochondrial"/>
    <property type="match status" value="1"/>
</dbReference>
<dbReference type="Gene3D" id="1.10.150.250">
    <property type="entry name" value="Flavinator of succinate dehydrogenase"/>
    <property type="match status" value="1"/>
</dbReference>
<dbReference type="HAMAP" id="MF_03057">
    <property type="entry name" value="SDHAF2"/>
    <property type="match status" value="1"/>
</dbReference>
<dbReference type="InterPro" id="IPR005631">
    <property type="entry name" value="SDH"/>
</dbReference>
<dbReference type="InterPro" id="IPR036714">
    <property type="entry name" value="SDH_sf"/>
</dbReference>
<dbReference type="InterPro" id="IPR028882">
    <property type="entry name" value="SDHAF2"/>
</dbReference>
<dbReference type="PANTHER" id="PTHR12469">
    <property type="entry name" value="PROTEIN EMI5 HOMOLOG, MITOCHONDRIAL"/>
    <property type="match status" value="1"/>
</dbReference>
<dbReference type="PANTHER" id="PTHR12469:SF2">
    <property type="entry name" value="SUCCINATE DEHYDROGENASE ASSEMBLY FACTOR 2, MITOCHONDRIAL"/>
    <property type="match status" value="1"/>
</dbReference>
<dbReference type="Pfam" id="PF03937">
    <property type="entry name" value="Sdh5"/>
    <property type="match status" value="1"/>
</dbReference>
<dbReference type="SUPFAM" id="SSF109910">
    <property type="entry name" value="YgfY-like"/>
    <property type="match status" value="1"/>
</dbReference>
<accession>A6ZND9</accession>